<dbReference type="EMBL" id="M67494">
    <property type="protein sequence ID" value="AAC13367.1"/>
    <property type="molecule type" value="Genomic_DNA"/>
</dbReference>
<dbReference type="EMBL" id="AE014298">
    <property type="protein sequence ID" value="AAF46132.1"/>
    <property type="molecule type" value="Genomic_DNA"/>
</dbReference>
<dbReference type="EMBL" id="AY122159">
    <property type="protein sequence ID" value="AAM52671.1"/>
    <property type="molecule type" value="mRNA"/>
</dbReference>
<dbReference type="PIR" id="A39932">
    <property type="entry name" value="A39932"/>
</dbReference>
<dbReference type="RefSeq" id="NP_001284928.1">
    <property type="nucleotide sequence ID" value="NM_001297999.1"/>
</dbReference>
<dbReference type="RefSeq" id="NP_001284929.1">
    <property type="nucleotide sequence ID" value="NM_001298000.1"/>
</dbReference>
<dbReference type="RefSeq" id="NP_001284930.1">
    <property type="nucleotide sequence ID" value="NM_001298001.1"/>
</dbReference>
<dbReference type="RefSeq" id="NP_001284931.1">
    <property type="nucleotide sequence ID" value="NM_001298002.1"/>
</dbReference>
<dbReference type="RefSeq" id="NP_511057.1">
    <property type="nucleotide sequence ID" value="NM_078502.3"/>
</dbReference>
<dbReference type="SMR" id="P40423"/>
<dbReference type="BioGRID" id="58046">
    <property type="interactions" value="55"/>
</dbReference>
<dbReference type="FunCoup" id="P40423">
    <property type="interactions" value="839"/>
</dbReference>
<dbReference type="IntAct" id="P40423">
    <property type="interactions" value="79"/>
</dbReference>
<dbReference type="STRING" id="7227.FBpp0308587"/>
<dbReference type="iPTMnet" id="P40423"/>
<dbReference type="PaxDb" id="7227-FBpp0070842"/>
<dbReference type="DNASU" id="31554"/>
<dbReference type="EnsemblMetazoa" id="FBtr0070877">
    <property type="protein sequence ID" value="FBpp0070842"/>
    <property type="gene ID" value="FBgn0003514"/>
</dbReference>
<dbReference type="EnsemblMetazoa" id="FBtr0339502">
    <property type="protein sequence ID" value="FBpp0308586"/>
    <property type="gene ID" value="FBgn0003514"/>
</dbReference>
<dbReference type="EnsemblMetazoa" id="FBtr0339503">
    <property type="protein sequence ID" value="FBpp0308587"/>
    <property type="gene ID" value="FBgn0003514"/>
</dbReference>
<dbReference type="EnsemblMetazoa" id="FBtr0339504">
    <property type="protein sequence ID" value="FBpp0308588"/>
    <property type="gene ID" value="FBgn0003514"/>
</dbReference>
<dbReference type="EnsemblMetazoa" id="FBtr0345294">
    <property type="protein sequence ID" value="FBpp0311461"/>
    <property type="gene ID" value="FBgn0003514"/>
</dbReference>
<dbReference type="GeneID" id="31554"/>
<dbReference type="KEGG" id="dme:Dmel_CG3595"/>
<dbReference type="AGR" id="FB:FBgn0003514"/>
<dbReference type="CTD" id="31554"/>
<dbReference type="FlyBase" id="FBgn0003514">
    <property type="gene designation" value="sqh"/>
</dbReference>
<dbReference type="VEuPathDB" id="VectorBase:FBgn0003514"/>
<dbReference type="eggNOG" id="KOG0031">
    <property type="taxonomic scope" value="Eukaryota"/>
</dbReference>
<dbReference type="GeneTree" id="ENSGT00940000155458"/>
<dbReference type="HOGENOM" id="CLU_061288_9_3_1"/>
<dbReference type="InParanoid" id="P40423"/>
<dbReference type="OMA" id="GVNFTMF"/>
<dbReference type="OrthoDB" id="429467at2759"/>
<dbReference type="PhylomeDB" id="P40423"/>
<dbReference type="Reactome" id="R-DME-350416">
    <property type="pathway name" value="Regulation of non-muscle Myosin II"/>
</dbReference>
<dbReference type="Reactome" id="R-DME-350480">
    <property type="pathway name" value="Activation of non-muscle Myosin II"/>
</dbReference>
<dbReference type="Reactome" id="R-DME-3928664">
    <property type="pathway name" value="Ephrin signaling"/>
</dbReference>
<dbReference type="Reactome" id="R-DME-445355">
    <property type="pathway name" value="Smooth Muscle Contraction"/>
</dbReference>
<dbReference type="Reactome" id="R-DME-5627123">
    <property type="pathway name" value="RHO GTPases activate PAKs"/>
</dbReference>
<dbReference type="SignaLink" id="P40423"/>
<dbReference type="BioGRID-ORCS" id="31554">
    <property type="hits" value="0 hits in 3 CRISPR screens"/>
</dbReference>
<dbReference type="GenomeRNAi" id="31554"/>
<dbReference type="PRO" id="PR:P40423"/>
<dbReference type="Proteomes" id="UP000000803">
    <property type="component" value="Chromosome X"/>
</dbReference>
<dbReference type="Bgee" id="FBgn0003514">
    <property type="expression patterns" value="Expressed in saliva-secreting gland and 234 other cell types or tissues"/>
</dbReference>
<dbReference type="ExpressionAtlas" id="P40423">
    <property type="expression patterns" value="baseline and differential"/>
</dbReference>
<dbReference type="GO" id="GO:1903144">
    <property type="term" value="C:actomyosin contractile ring actin filament"/>
    <property type="evidence" value="ECO:0000314"/>
    <property type="project" value="FlyBase"/>
</dbReference>
<dbReference type="GO" id="GO:0045179">
    <property type="term" value="C:apical cortex"/>
    <property type="evidence" value="ECO:0000314"/>
    <property type="project" value="FlyBase"/>
</dbReference>
<dbReference type="GO" id="GO:0045177">
    <property type="term" value="C:apical part of cell"/>
    <property type="evidence" value="ECO:0000314"/>
    <property type="project" value="FlyBase"/>
</dbReference>
<dbReference type="GO" id="GO:0016324">
    <property type="term" value="C:apical plasma membrane"/>
    <property type="evidence" value="ECO:0000314"/>
    <property type="project" value="FlyBase"/>
</dbReference>
<dbReference type="GO" id="GO:0106037">
    <property type="term" value="C:apicomedial cortex"/>
    <property type="evidence" value="ECO:0000314"/>
    <property type="project" value="FlyBase"/>
</dbReference>
<dbReference type="GO" id="GO:0005938">
    <property type="term" value="C:cell cortex"/>
    <property type="evidence" value="ECO:0000314"/>
    <property type="project" value="FlyBase"/>
</dbReference>
<dbReference type="GO" id="GO:0110071">
    <property type="term" value="C:cellularization cleavage furrow invagination front"/>
    <property type="evidence" value="ECO:0000314"/>
    <property type="project" value="FlyBase"/>
</dbReference>
<dbReference type="GO" id="GO:0032154">
    <property type="term" value="C:cleavage furrow"/>
    <property type="evidence" value="ECO:0000314"/>
    <property type="project" value="FlyBase"/>
</dbReference>
<dbReference type="GO" id="GO:0005737">
    <property type="term" value="C:cytoplasm"/>
    <property type="evidence" value="ECO:0000314"/>
    <property type="project" value="FlyBase"/>
</dbReference>
<dbReference type="GO" id="GO:0005829">
    <property type="term" value="C:cytosol"/>
    <property type="evidence" value="ECO:0000304"/>
    <property type="project" value="Reactome"/>
</dbReference>
<dbReference type="GO" id="GO:0035183">
    <property type="term" value="C:female germline ring canal inner rim"/>
    <property type="evidence" value="ECO:0000314"/>
    <property type="project" value="FlyBase"/>
</dbReference>
<dbReference type="GO" id="GO:0030496">
    <property type="term" value="C:midbody"/>
    <property type="evidence" value="ECO:0000314"/>
    <property type="project" value="FlyBase"/>
</dbReference>
<dbReference type="GO" id="GO:0016460">
    <property type="term" value="C:myosin II complex"/>
    <property type="evidence" value="ECO:0000353"/>
    <property type="project" value="FlyBase"/>
</dbReference>
<dbReference type="GO" id="GO:0005886">
    <property type="term" value="C:plasma membrane"/>
    <property type="evidence" value="ECO:0000314"/>
    <property type="project" value="FlyBase"/>
</dbReference>
<dbReference type="GO" id="GO:0051233">
    <property type="term" value="C:spindle midzone"/>
    <property type="evidence" value="ECO:0000314"/>
    <property type="project" value="FlyBase"/>
</dbReference>
<dbReference type="GO" id="GO:0001671">
    <property type="term" value="F:ATPase activator activity"/>
    <property type="evidence" value="ECO:0000314"/>
    <property type="project" value="FlyBase"/>
</dbReference>
<dbReference type="GO" id="GO:0005509">
    <property type="term" value="F:calcium ion binding"/>
    <property type="evidence" value="ECO:0007669"/>
    <property type="project" value="InterPro"/>
</dbReference>
<dbReference type="GO" id="GO:0032036">
    <property type="term" value="F:myosin heavy chain binding"/>
    <property type="evidence" value="ECO:0000353"/>
    <property type="project" value="FlyBase"/>
</dbReference>
<dbReference type="GO" id="GO:0030048">
    <property type="term" value="P:actin filament-based movement"/>
    <property type="evidence" value="ECO:0000305"/>
    <property type="project" value="FlyBase"/>
</dbReference>
<dbReference type="GO" id="GO:0003383">
    <property type="term" value="P:apical constriction"/>
    <property type="evidence" value="ECO:0000304"/>
    <property type="project" value="FlyBase"/>
</dbReference>
<dbReference type="GO" id="GO:0003384">
    <property type="term" value="P:apical constriction involved in gastrulation"/>
    <property type="evidence" value="ECO:0000315"/>
    <property type="project" value="FlyBase"/>
</dbReference>
<dbReference type="GO" id="GO:0007298">
    <property type="term" value="P:border follicle cell migration"/>
    <property type="evidence" value="ECO:0000315"/>
    <property type="project" value="FlyBase"/>
</dbReference>
<dbReference type="GO" id="GO:0090254">
    <property type="term" value="P:cell elongation involved in imaginal disc-derived wing morphogenesis"/>
    <property type="evidence" value="ECO:0000315"/>
    <property type="project" value="FlyBase"/>
</dbReference>
<dbReference type="GO" id="GO:0060289">
    <property type="term" value="P:compartment boundary maintenance"/>
    <property type="evidence" value="ECO:0000315"/>
    <property type="project" value="FlyBase"/>
</dbReference>
<dbReference type="GO" id="GO:0060288">
    <property type="term" value="P:formation of a compartment boundary"/>
    <property type="evidence" value="ECO:0000314"/>
    <property type="project" value="FlyBase"/>
</dbReference>
<dbReference type="GO" id="GO:0035317">
    <property type="term" value="P:imaginal disc-derived wing hair organization"/>
    <property type="evidence" value="ECO:0000316"/>
    <property type="project" value="FlyBase"/>
</dbReference>
<dbReference type="GO" id="GO:0040011">
    <property type="term" value="P:locomotion"/>
    <property type="evidence" value="ECO:0000318"/>
    <property type="project" value="GO_Central"/>
</dbReference>
<dbReference type="GO" id="GO:0045199">
    <property type="term" value="P:maintenance of epithelial cell apical/basal polarity"/>
    <property type="evidence" value="ECO:0000315"/>
    <property type="project" value="FlyBase"/>
</dbReference>
<dbReference type="GO" id="GO:0000281">
    <property type="term" value="P:mitotic cytokinesis"/>
    <property type="evidence" value="ECO:0000314"/>
    <property type="project" value="FlyBase"/>
</dbReference>
<dbReference type="GO" id="GO:0031036">
    <property type="term" value="P:myosin II filament assembly"/>
    <property type="evidence" value="ECO:0000315"/>
    <property type="project" value="FlyBase"/>
</dbReference>
<dbReference type="GO" id="GO:0045879">
    <property type="term" value="P:negative regulation of smoothened signaling pathway"/>
    <property type="evidence" value="ECO:0000315"/>
    <property type="project" value="FlyBase"/>
</dbReference>
<dbReference type="GO" id="GO:0035191">
    <property type="term" value="P:nuclear axial expansion"/>
    <property type="evidence" value="ECO:0000315"/>
    <property type="project" value="FlyBase"/>
</dbReference>
<dbReference type="GO" id="GO:0007314">
    <property type="term" value="P:oocyte anterior/posterior axis specification"/>
    <property type="evidence" value="ECO:0000315"/>
    <property type="project" value="FlyBase"/>
</dbReference>
<dbReference type="GO" id="GO:0007300">
    <property type="term" value="P:ovarian nurse cell to oocyte transport"/>
    <property type="evidence" value="ECO:0000315"/>
    <property type="project" value="FlyBase"/>
</dbReference>
<dbReference type="GO" id="GO:1903688">
    <property type="term" value="P:positive regulation of border follicle cell migration"/>
    <property type="evidence" value="ECO:0000316"/>
    <property type="project" value="FlyBase"/>
</dbReference>
<dbReference type="GO" id="GO:0009791">
    <property type="term" value="P:post-embryonic development"/>
    <property type="evidence" value="ECO:0000318"/>
    <property type="project" value="GO_Central"/>
</dbReference>
<dbReference type="GO" id="GO:0032956">
    <property type="term" value="P:regulation of actin cytoskeleton organization"/>
    <property type="evidence" value="ECO:0000315"/>
    <property type="project" value="FlyBase"/>
</dbReference>
<dbReference type="GO" id="GO:0035159">
    <property type="term" value="P:regulation of tube length, open tracheal system"/>
    <property type="evidence" value="ECO:0000315"/>
    <property type="project" value="FlyBase"/>
</dbReference>
<dbReference type="GO" id="GO:0035277">
    <property type="term" value="P:spiracle morphogenesis, open tracheal system"/>
    <property type="evidence" value="ECO:0000315"/>
    <property type="project" value="FlyBase"/>
</dbReference>
<dbReference type="GO" id="GO:0110069">
    <property type="term" value="P:syncytial embryo cellularization"/>
    <property type="evidence" value="ECO:0000270"/>
    <property type="project" value="FlyBase"/>
</dbReference>
<dbReference type="GO" id="GO:0035148">
    <property type="term" value="P:tube formation"/>
    <property type="evidence" value="ECO:0000315"/>
    <property type="project" value="FlyBase"/>
</dbReference>
<dbReference type="GO" id="GO:0042060">
    <property type="term" value="P:wound healing"/>
    <property type="evidence" value="ECO:0000315"/>
    <property type="project" value="FlyBase"/>
</dbReference>
<dbReference type="CDD" id="cd00051">
    <property type="entry name" value="EFh"/>
    <property type="match status" value="1"/>
</dbReference>
<dbReference type="FunFam" id="1.10.238.10:FF:000010">
    <property type="entry name" value="Myosin regulatory light chain 2, atrial isoform"/>
    <property type="match status" value="1"/>
</dbReference>
<dbReference type="FunFam" id="1.10.238.10:FF:000007">
    <property type="entry name" value="Putative myosin regulatory light chain sqh"/>
    <property type="match status" value="1"/>
</dbReference>
<dbReference type="Gene3D" id="1.10.238.10">
    <property type="entry name" value="EF-hand"/>
    <property type="match status" value="2"/>
</dbReference>
<dbReference type="InterPro" id="IPR011992">
    <property type="entry name" value="EF-hand-dom_pair"/>
</dbReference>
<dbReference type="InterPro" id="IPR018247">
    <property type="entry name" value="EF_Hand_1_Ca_BS"/>
</dbReference>
<dbReference type="InterPro" id="IPR002048">
    <property type="entry name" value="EF_hand_dom"/>
</dbReference>
<dbReference type="InterPro" id="IPR050403">
    <property type="entry name" value="Myosin_RLC"/>
</dbReference>
<dbReference type="PANTHER" id="PTHR23049">
    <property type="entry name" value="MYOSIN REGULATORY LIGHT CHAIN 2"/>
    <property type="match status" value="1"/>
</dbReference>
<dbReference type="Pfam" id="PF13499">
    <property type="entry name" value="EF-hand_7"/>
    <property type="match status" value="1"/>
</dbReference>
<dbReference type="SMART" id="SM00054">
    <property type="entry name" value="EFh"/>
    <property type="match status" value="2"/>
</dbReference>
<dbReference type="SUPFAM" id="SSF47473">
    <property type="entry name" value="EF-hand"/>
    <property type="match status" value="1"/>
</dbReference>
<dbReference type="PROSITE" id="PS00018">
    <property type="entry name" value="EF_HAND_1"/>
    <property type="match status" value="1"/>
</dbReference>
<dbReference type="PROSITE" id="PS50222">
    <property type="entry name" value="EF_HAND_2"/>
    <property type="match status" value="2"/>
</dbReference>
<organism>
    <name type="scientific">Drosophila melanogaster</name>
    <name type="common">Fruit fly</name>
    <dbReference type="NCBI Taxonomy" id="7227"/>
    <lineage>
        <taxon>Eukaryota</taxon>
        <taxon>Metazoa</taxon>
        <taxon>Ecdysozoa</taxon>
        <taxon>Arthropoda</taxon>
        <taxon>Hexapoda</taxon>
        <taxon>Insecta</taxon>
        <taxon>Pterygota</taxon>
        <taxon>Neoptera</taxon>
        <taxon>Endopterygota</taxon>
        <taxon>Diptera</taxon>
        <taxon>Brachycera</taxon>
        <taxon>Muscomorpha</taxon>
        <taxon>Ephydroidea</taxon>
        <taxon>Drosophilidae</taxon>
        <taxon>Drosophila</taxon>
        <taxon>Sophophora</taxon>
    </lineage>
</organism>
<keyword id="KW-0106">Calcium</keyword>
<keyword id="KW-0479">Metal-binding</keyword>
<keyword id="KW-0505">Motor protein</keyword>
<keyword id="KW-0518">Myosin</keyword>
<keyword id="KW-0597">Phosphoprotein</keyword>
<keyword id="KW-1185">Reference proteome</keyword>
<keyword id="KW-0677">Repeat</keyword>
<evidence type="ECO:0000250" key="1"/>
<evidence type="ECO:0000255" key="2">
    <source>
        <dbReference type="PROSITE-ProRule" id="PRU00448"/>
    </source>
</evidence>
<evidence type="ECO:0000269" key="3">
    <source>
    </source>
</evidence>
<evidence type="ECO:0000269" key="4">
    <source>
    </source>
</evidence>
<evidence type="ECO:0000269" key="5">
    <source>
    </source>
</evidence>
<comment type="function">
    <text evidence="5">Required for cytokinesis, could regulate contractile ring function.</text>
</comment>
<comment type="subunit">
    <text>Myosin is a hexamer of 2 heavy chains and 4 light chains.</text>
</comment>
<comment type="PTM">
    <text evidence="1">Phosphorylation plays a central role in myosin regulation.</text>
</comment>
<comment type="disruption phenotype">
    <text evidence="5">Mitotic defects including failure in cytokinesis.</text>
</comment>
<comment type="miscellaneous">
    <text evidence="1">This chain binds calcium.</text>
</comment>
<protein>
    <recommendedName>
        <fullName>Myosin regulatory light chain sqh</fullName>
    </recommendedName>
    <alternativeName>
        <fullName>Myosin regulatory light chain, nonmuscle</fullName>
        <shortName>MRLC-C</shortName>
    </alternativeName>
    <alternativeName>
        <fullName>Protein spaghetti-squash</fullName>
    </alternativeName>
</protein>
<accession>P40423</accession>
<accession>Q540V2</accession>
<accession>Q9W428</accession>
<name>SQH_DROME</name>
<feature type="chain" id="PRO_0000198747" description="Myosin regulatory light chain sqh">
    <location>
        <begin position="1"/>
        <end position="174"/>
    </location>
</feature>
<feature type="domain" description="EF-hand 1" evidence="2">
    <location>
        <begin position="31"/>
        <end position="66"/>
    </location>
</feature>
<feature type="domain" description="EF-hand 2" evidence="2">
    <location>
        <begin position="100"/>
        <end position="135"/>
    </location>
</feature>
<feature type="binding site" evidence="2">
    <location>
        <position position="44"/>
    </location>
    <ligand>
        <name>Ca(2+)</name>
        <dbReference type="ChEBI" id="CHEBI:29108"/>
    </ligand>
</feature>
<feature type="binding site" evidence="2">
    <location>
        <position position="46"/>
    </location>
    <ligand>
        <name>Ca(2+)</name>
        <dbReference type="ChEBI" id="CHEBI:29108"/>
    </ligand>
</feature>
<feature type="binding site" evidence="2">
    <location>
        <position position="48"/>
    </location>
    <ligand>
        <name>Ca(2+)</name>
        <dbReference type="ChEBI" id="CHEBI:29108"/>
    </ligand>
</feature>
<feature type="binding site" evidence="2">
    <location>
        <position position="55"/>
    </location>
    <ligand>
        <name>Ca(2+)</name>
        <dbReference type="ChEBI" id="CHEBI:29108"/>
    </ligand>
</feature>
<feature type="modified residue" description="Phosphothreonine" evidence="3 4">
    <location>
        <position position="21"/>
    </location>
</feature>
<feature type="modified residue" description="Phosphoserine" evidence="3 4">
    <location>
        <position position="22"/>
    </location>
</feature>
<reference key="1">
    <citation type="journal article" date="1991" name="Cell">
        <title>The regulatory light chain of nonmuscle myosin is encoded by spaghetti-squash, a gene required for cytokinesis in Drosophila.</title>
        <authorList>
            <person name="Karess R.E."/>
            <person name="Chang X.J."/>
            <person name="Edwards K.A."/>
            <person name="Kulkarni S."/>
            <person name="Aguilera I."/>
            <person name="Kiehart D.P."/>
        </authorList>
    </citation>
    <scope>NUCLEOTIDE SEQUENCE [GENOMIC DNA]</scope>
    <scope>FUNCTION</scope>
    <scope>DISRUPTION PHENOTYPE</scope>
</reference>
<reference key="2">
    <citation type="journal article" date="2000" name="Science">
        <title>The genome sequence of Drosophila melanogaster.</title>
        <authorList>
            <person name="Adams M.D."/>
            <person name="Celniker S.E."/>
            <person name="Holt R.A."/>
            <person name="Evans C.A."/>
            <person name="Gocayne J.D."/>
            <person name="Amanatides P.G."/>
            <person name="Scherer S.E."/>
            <person name="Li P.W."/>
            <person name="Hoskins R.A."/>
            <person name="Galle R.F."/>
            <person name="George R.A."/>
            <person name="Lewis S.E."/>
            <person name="Richards S."/>
            <person name="Ashburner M."/>
            <person name="Henderson S.N."/>
            <person name="Sutton G.G."/>
            <person name="Wortman J.R."/>
            <person name="Yandell M.D."/>
            <person name="Zhang Q."/>
            <person name="Chen L.X."/>
            <person name="Brandon R.C."/>
            <person name="Rogers Y.-H.C."/>
            <person name="Blazej R.G."/>
            <person name="Champe M."/>
            <person name="Pfeiffer B.D."/>
            <person name="Wan K.H."/>
            <person name="Doyle C."/>
            <person name="Baxter E.G."/>
            <person name="Helt G."/>
            <person name="Nelson C.R."/>
            <person name="Miklos G.L.G."/>
            <person name="Abril J.F."/>
            <person name="Agbayani A."/>
            <person name="An H.-J."/>
            <person name="Andrews-Pfannkoch C."/>
            <person name="Baldwin D."/>
            <person name="Ballew R.M."/>
            <person name="Basu A."/>
            <person name="Baxendale J."/>
            <person name="Bayraktaroglu L."/>
            <person name="Beasley E.M."/>
            <person name="Beeson K.Y."/>
            <person name="Benos P.V."/>
            <person name="Berman B.P."/>
            <person name="Bhandari D."/>
            <person name="Bolshakov S."/>
            <person name="Borkova D."/>
            <person name="Botchan M.R."/>
            <person name="Bouck J."/>
            <person name="Brokstein P."/>
            <person name="Brottier P."/>
            <person name="Burtis K.C."/>
            <person name="Busam D.A."/>
            <person name="Butler H."/>
            <person name="Cadieu E."/>
            <person name="Center A."/>
            <person name="Chandra I."/>
            <person name="Cherry J.M."/>
            <person name="Cawley S."/>
            <person name="Dahlke C."/>
            <person name="Davenport L.B."/>
            <person name="Davies P."/>
            <person name="de Pablos B."/>
            <person name="Delcher A."/>
            <person name="Deng Z."/>
            <person name="Mays A.D."/>
            <person name="Dew I."/>
            <person name="Dietz S.M."/>
            <person name="Dodson K."/>
            <person name="Doup L.E."/>
            <person name="Downes M."/>
            <person name="Dugan-Rocha S."/>
            <person name="Dunkov B.C."/>
            <person name="Dunn P."/>
            <person name="Durbin K.J."/>
            <person name="Evangelista C.C."/>
            <person name="Ferraz C."/>
            <person name="Ferriera S."/>
            <person name="Fleischmann W."/>
            <person name="Fosler C."/>
            <person name="Gabrielian A.E."/>
            <person name="Garg N.S."/>
            <person name="Gelbart W.M."/>
            <person name="Glasser K."/>
            <person name="Glodek A."/>
            <person name="Gong F."/>
            <person name="Gorrell J.H."/>
            <person name="Gu Z."/>
            <person name="Guan P."/>
            <person name="Harris M."/>
            <person name="Harris N.L."/>
            <person name="Harvey D.A."/>
            <person name="Heiman T.J."/>
            <person name="Hernandez J.R."/>
            <person name="Houck J."/>
            <person name="Hostin D."/>
            <person name="Houston K.A."/>
            <person name="Howland T.J."/>
            <person name="Wei M.-H."/>
            <person name="Ibegwam C."/>
            <person name="Jalali M."/>
            <person name="Kalush F."/>
            <person name="Karpen G.H."/>
            <person name="Ke Z."/>
            <person name="Kennison J.A."/>
            <person name="Ketchum K.A."/>
            <person name="Kimmel B.E."/>
            <person name="Kodira C.D."/>
            <person name="Kraft C.L."/>
            <person name="Kravitz S."/>
            <person name="Kulp D."/>
            <person name="Lai Z."/>
            <person name="Lasko P."/>
            <person name="Lei Y."/>
            <person name="Levitsky A.A."/>
            <person name="Li J.H."/>
            <person name="Li Z."/>
            <person name="Liang Y."/>
            <person name="Lin X."/>
            <person name="Liu X."/>
            <person name="Mattei B."/>
            <person name="McIntosh T.C."/>
            <person name="McLeod M.P."/>
            <person name="McPherson D."/>
            <person name="Merkulov G."/>
            <person name="Milshina N.V."/>
            <person name="Mobarry C."/>
            <person name="Morris J."/>
            <person name="Moshrefi A."/>
            <person name="Mount S.M."/>
            <person name="Moy M."/>
            <person name="Murphy B."/>
            <person name="Murphy L."/>
            <person name="Muzny D.M."/>
            <person name="Nelson D.L."/>
            <person name="Nelson D.R."/>
            <person name="Nelson K.A."/>
            <person name="Nixon K."/>
            <person name="Nusskern D.R."/>
            <person name="Pacleb J.M."/>
            <person name="Palazzolo M."/>
            <person name="Pittman G.S."/>
            <person name="Pan S."/>
            <person name="Pollard J."/>
            <person name="Puri V."/>
            <person name="Reese M.G."/>
            <person name="Reinert K."/>
            <person name="Remington K."/>
            <person name="Saunders R.D.C."/>
            <person name="Scheeler F."/>
            <person name="Shen H."/>
            <person name="Shue B.C."/>
            <person name="Siden-Kiamos I."/>
            <person name="Simpson M."/>
            <person name="Skupski M.P."/>
            <person name="Smith T.J."/>
            <person name="Spier E."/>
            <person name="Spradling A.C."/>
            <person name="Stapleton M."/>
            <person name="Strong R."/>
            <person name="Sun E."/>
            <person name="Svirskas R."/>
            <person name="Tector C."/>
            <person name="Turner R."/>
            <person name="Venter E."/>
            <person name="Wang A.H."/>
            <person name="Wang X."/>
            <person name="Wang Z.-Y."/>
            <person name="Wassarman D.A."/>
            <person name="Weinstock G.M."/>
            <person name="Weissenbach J."/>
            <person name="Williams S.M."/>
            <person name="Woodage T."/>
            <person name="Worley K.C."/>
            <person name="Wu D."/>
            <person name="Yang S."/>
            <person name="Yao Q.A."/>
            <person name="Ye J."/>
            <person name="Yeh R.-F."/>
            <person name="Zaveri J.S."/>
            <person name="Zhan M."/>
            <person name="Zhang G."/>
            <person name="Zhao Q."/>
            <person name="Zheng L."/>
            <person name="Zheng X.H."/>
            <person name="Zhong F.N."/>
            <person name="Zhong W."/>
            <person name="Zhou X."/>
            <person name="Zhu S.C."/>
            <person name="Zhu X."/>
            <person name="Smith H.O."/>
            <person name="Gibbs R.A."/>
            <person name="Myers E.W."/>
            <person name="Rubin G.M."/>
            <person name="Venter J.C."/>
        </authorList>
    </citation>
    <scope>NUCLEOTIDE SEQUENCE [LARGE SCALE GENOMIC DNA]</scope>
    <source>
        <strain>Berkeley</strain>
    </source>
</reference>
<reference key="3">
    <citation type="journal article" date="2002" name="Genome Biol.">
        <title>Annotation of the Drosophila melanogaster euchromatic genome: a systematic review.</title>
        <authorList>
            <person name="Misra S."/>
            <person name="Crosby M.A."/>
            <person name="Mungall C.J."/>
            <person name="Matthews B.B."/>
            <person name="Campbell K.S."/>
            <person name="Hradecky P."/>
            <person name="Huang Y."/>
            <person name="Kaminker J.S."/>
            <person name="Millburn G.H."/>
            <person name="Prochnik S.E."/>
            <person name="Smith C.D."/>
            <person name="Tupy J.L."/>
            <person name="Whitfield E.J."/>
            <person name="Bayraktaroglu L."/>
            <person name="Berman B.P."/>
            <person name="Bettencourt B.R."/>
            <person name="Celniker S.E."/>
            <person name="de Grey A.D.N.J."/>
            <person name="Drysdale R.A."/>
            <person name="Harris N.L."/>
            <person name="Richter J."/>
            <person name="Russo S."/>
            <person name="Schroeder A.J."/>
            <person name="Shu S.Q."/>
            <person name="Stapleton M."/>
            <person name="Yamada C."/>
            <person name="Ashburner M."/>
            <person name="Gelbart W.M."/>
            <person name="Rubin G.M."/>
            <person name="Lewis S.E."/>
        </authorList>
    </citation>
    <scope>GENOME REANNOTATION</scope>
    <source>
        <strain>Berkeley</strain>
    </source>
</reference>
<reference key="4">
    <citation type="journal article" date="2002" name="Genome Biol.">
        <title>A Drosophila full-length cDNA resource.</title>
        <authorList>
            <person name="Stapleton M."/>
            <person name="Carlson J.W."/>
            <person name="Brokstein P."/>
            <person name="Yu C."/>
            <person name="Champe M."/>
            <person name="George R.A."/>
            <person name="Guarin H."/>
            <person name="Kronmiller B."/>
            <person name="Pacleb J.M."/>
            <person name="Park S."/>
            <person name="Wan K.H."/>
            <person name="Rubin G.M."/>
            <person name="Celniker S.E."/>
        </authorList>
    </citation>
    <scope>NUCLEOTIDE SEQUENCE [LARGE SCALE MRNA]</scope>
    <source>
        <strain>Berkeley</strain>
        <tissue>Embryo</tissue>
    </source>
</reference>
<reference key="5">
    <citation type="journal article" date="2007" name="Mol. Biosyst.">
        <title>An integrated chemical, mass spectrometric and computational strategy for (quantitative) phosphoproteomics: application to Drosophila melanogaster Kc167 cells.</title>
        <authorList>
            <person name="Bodenmiller B."/>
            <person name="Mueller L.N."/>
            <person name="Pedrioli P.G.A."/>
            <person name="Pflieger D."/>
            <person name="Juenger M.A."/>
            <person name="Eng J.K."/>
            <person name="Aebersold R."/>
            <person name="Tao W.A."/>
        </authorList>
    </citation>
    <scope>PHOSPHORYLATION [LARGE SCALE ANALYSIS] AT THR-21 AND SER-22</scope>
    <scope>IDENTIFICATION BY MASS SPECTROMETRY</scope>
</reference>
<reference key="6">
    <citation type="journal article" date="2008" name="J. Proteome Res.">
        <title>Phosphoproteome analysis of Drosophila melanogaster embryos.</title>
        <authorList>
            <person name="Zhai B."/>
            <person name="Villen J."/>
            <person name="Beausoleil S.A."/>
            <person name="Mintseris J."/>
            <person name="Gygi S.P."/>
        </authorList>
    </citation>
    <scope>PHOSPHORYLATION [LARGE SCALE ANALYSIS] AT THR-21 AND SER-22</scope>
    <scope>IDENTIFICATION BY MASS SPECTROMETRY</scope>
    <source>
        <tissue>Embryo</tissue>
    </source>
</reference>
<proteinExistence type="evidence at protein level"/>
<gene>
    <name type="primary">sqh</name>
    <name type="ORF">CG3595</name>
</gene>
<sequence>MSSRKTAGRRATTKKRAQRATSNVFAMFDQAQIAEFKEAFNMIDQNRDGFVEKEDLHDMLASLGKNPTDDYLDGMMNEAPGPINFTMFLTLFGERLQGTDPEDVIKNAFGCFDEENMGVLPEDRLRELLTTMGDRFTDEDVDEMYREAPIKNGLFDYLEFTRILKHGAKDKDEQ</sequence>